<accession>P60278</accession>
<accession>Q99W65</accession>
<keyword id="KW-0240">DNA-directed RNA polymerase</keyword>
<keyword id="KW-0548">Nucleotidyltransferase</keyword>
<keyword id="KW-0804">Transcription</keyword>
<keyword id="KW-0808">Transferase</keyword>
<feature type="chain" id="PRO_0000047960" description="DNA-directed RNA polymerase subunit beta">
    <location>
        <begin position="1"/>
        <end position="1183"/>
    </location>
</feature>
<gene>
    <name evidence="1" type="primary">rpoB</name>
    <name type="ordered locus">SA0500</name>
</gene>
<reference key="1">
    <citation type="journal article" date="2001" name="Lancet">
        <title>Whole genome sequencing of meticillin-resistant Staphylococcus aureus.</title>
        <authorList>
            <person name="Kuroda M."/>
            <person name="Ohta T."/>
            <person name="Uchiyama I."/>
            <person name="Baba T."/>
            <person name="Yuzawa H."/>
            <person name="Kobayashi I."/>
            <person name="Cui L."/>
            <person name="Oguchi A."/>
            <person name="Aoki K."/>
            <person name="Nagai Y."/>
            <person name="Lian J.-Q."/>
            <person name="Ito T."/>
            <person name="Kanamori M."/>
            <person name="Matsumaru H."/>
            <person name="Maruyama A."/>
            <person name="Murakami H."/>
            <person name="Hosoyama A."/>
            <person name="Mizutani-Ui Y."/>
            <person name="Takahashi N.K."/>
            <person name="Sawano T."/>
            <person name="Inoue R."/>
            <person name="Kaito C."/>
            <person name="Sekimizu K."/>
            <person name="Hirakawa H."/>
            <person name="Kuhara S."/>
            <person name="Goto S."/>
            <person name="Yabuzaki J."/>
            <person name="Kanehisa M."/>
            <person name="Yamashita A."/>
            <person name="Oshima K."/>
            <person name="Furuya K."/>
            <person name="Yoshino C."/>
            <person name="Shiba T."/>
            <person name="Hattori M."/>
            <person name="Ogasawara N."/>
            <person name="Hayashi H."/>
            <person name="Hiramatsu K."/>
        </authorList>
    </citation>
    <scope>NUCLEOTIDE SEQUENCE [LARGE SCALE GENOMIC DNA]</scope>
    <source>
        <strain>N315</strain>
    </source>
</reference>
<reference key="2">
    <citation type="submission" date="2007-10" db="UniProtKB">
        <title>Shotgun proteomic analysis of total and membrane protein extracts of S. aureus strain N315.</title>
        <authorList>
            <person name="Vaezzadeh A.R."/>
            <person name="Deshusses J."/>
            <person name="Lescuyer P."/>
            <person name="Hochstrasser D.F."/>
        </authorList>
    </citation>
    <scope>IDENTIFICATION BY MASS SPECTROMETRY [LARGE SCALE ANALYSIS]</scope>
    <source>
        <strain>N315</strain>
    </source>
</reference>
<organism>
    <name type="scientific">Staphylococcus aureus (strain N315)</name>
    <dbReference type="NCBI Taxonomy" id="158879"/>
    <lineage>
        <taxon>Bacteria</taxon>
        <taxon>Bacillati</taxon>
        <taxon>Bacillota</taxon>
        <taxon>Bacilli</taxon>
        <taxon>Bacillales</taxon>
        <taxon>Staphylococcaceae</taxon>
        <taxon>Staphylococcus</taxon>
    </lineage>
</organism>
<evidence type="ECO:0000255" key="1">
    <source>
        <dbReference type="HAMAP-Rule" id="MF_01321"/>
    </source>
</evidence>
<comment type="function">
    <text evidence="1">DNA-dependent RNA polymerase catalyzes the transcription of DNA into RNA using the four ribonucleoside triphosphates as substrates.</text>
</comment>
<comment type="catalytic activity">
    <reaction evidence="1">
        <text>RNA(n) + a ribonucleoside 5'-triphosphate = RNA(n+1) + diphosphate</text>
        <dbReference type="Rhea" id="RHEA:21248"/>
        <dbReference type="Rhea" id="RHEA-COMP:14527"/>
        <dbReference type="Rhea" id="RHEA-COMP:17342"/>
        <dbReference type="ChEBI" id="CHEBI:33019"/>
        <dbReference type="ChEBI" id="CHEBI:61557"/>
        <dbReference type="ChEBI" id="CHEBI:140395"/>
        <dbReference type="EC" id="2.7.7.6"/>
    </reaction>
</comment>
<comment type="subunit">
    <text evidence="1">The RNAP catalytic core consists of 2 alpha, 1 beta, 1 beta' and 1 omega subunit. When a sigma factor is associated with the core the holoenzyme is formed, which can initiate transcription.</text>
</comment>
<comment type="similarity">
    <text evidence="1">Belongs to the RNA polymerase beta chain family.</text>
</comment>
<dbReference type="EC" id="2.7.7.6" evidence="1"/>
<dbReference type="EMBL" id="BA000018">
    <property type="protein sequence ID" value="BAB41731.1"/>
    <property type="molecule type" value="Genomic_DNA"/>
</dbReference>
<dbReference type="PIR" id="H89821">
    <property type="entry name" value="H89821"/>
</dbReference>
<dbReference type="RefSeq" id="WP_000918667.1">
    <property type="nucleotide sequence ID" value="NC_002745.2"/>
</dbReference>
<dbReference type="SMR" id="P60278"/>
<dbReference type="EnsemblBacteria" id="BAB41731">
    <property type="protein sequence ID" value="BAB41731"/>
    <property type="gene ID" value="BAB41731"/>
</dbReference>
<dbReference type="KEGG" id="sau:SA0500"/>
<dbReference type="HOGENOM" id="CLU_000524_4_1_9"/>
<dbReference type="GO" id="GO:0000428">
    <property type="term" value="C:DNA-directed RNA polymerase complex"/>
    <property type="evidence" value="ECO:0007669"/>
    <property type="project" value="UniProtKB-KW"/>
</dbReference>
<dbReference type="GO" id="GO:0003677">
    <property type="term" value="F:DNA binding"/>
    <property type="evidence" value="ECO:0007669"/>
    <property type="project" value="UniProtKB-UniRule"/>
</dbReference>
<dbReference type="GO" id="GO:0003899">
    <property type="term" value="F:DNA-directed RNA polymerase activity"/>
    <property type="evidence" value="ECO:0007669"/>
    <property type="project" value="UniProtKB-UniRule"/>
</dbReference>
<dbReference type="GO" id="GO:0032549">
    <property type="term" value="F:ribonucleoside binding"/>
    <property type="evidence" value="ECO:0007669"/>
    <property type="project" value="InterPro"/>
</dbReference>
<dbReference type="GO" id="GO:0006351">
    <property type="term" value="P:DNA-templated transcription"/>
    <property type="evidence" value="ECO:0007669"/>
    <property type="project" value="UniProtKB-UniRule"/>
</dbReference>
<dbReference type="CDD" id="cd00653">
    <property type="entry name" value="RNA_pol_B_RPB2"/>
    <property type="match status" value="1"/>
</dbReference>
<dbReference type="FunFam" id="3.90.1800.10:FF:000001">
    <property type="entry name" value="DNA-directed RNA polymerase subunit beta"/>
    <property type="match status" value="1"/>
</dbReference>
<dbReference type="Gene3D" id="2.40.50.100">
    <property type="match status" value="1"/>
</dbReference>
<dbReference type="Gene3D" id="2.40.50.150">
    <property type="match status" value="1"/>
</dbReference>
<dbReference type="Gene3D" id="3.90.1100.10">
    <property type="match status" value="3"/>
</dbReference>
<dbReference type="Gene3D" id="2.40.270.10">
    <property type="entry name" value="DNA-directed RNA polymerase, subunit 2, domain 6"/>
    <property type="match status" value="1"/>
</dbReference>
<dbReference type="Gene3D" id="3.90.1800.10">
    <property type="entry name" value="RNA polymerase alpha subunit dimerisation domain"/>
    <property type="match status" value="1"/>
</dbReference>
<dbReference type="Gene3D" id="3.90.1110.10">
    <property type="entry name" value="RNA polymerase Rpb2, domain 2"/>
    <property type="match status" value="1"/>
</dbReference>
<dbReference type="HAMAP" id="MF_01321">
    <property type="entry name" value="RNApol_bact_RpoB"/>
    <property type="match status" value="1"/>
</dbReference>
<dbReference type="InterPro" id="IPR019462">
    <property type="entry name" value="DNA-dir_RNA_pol_bsu_external_1"/>
</dbReference>
<dbReference type="InterPro" id="IPR015712">
    <property type="entry name" value="DNA-dir_RNA_pol_su2"/>
</dbReference>
<dbReference type="InterPro" id="IPR007120">
    <property type="entry name" value="DNA-dir_RNAP_su2_dom"/>
</dbReference>
<dbReference type="InterPro" id="IPR037033">
    <property type="entry name" value="DNA-dir_RNAP_su2_hyb_sf"/>
</dbReference>
<dbReference type="InterPro" id="IPR010243">
    <property type="entry name" value="RNA_pol_bsu_bac"/>
</dbReference>
<dbReference type="InterPro" id="IPR007121">
    <property type="entry name" value="RNA_pol_bsu_CS"/>
</dbReference>
<dbReference type="InterPro" id="IPR007644">
    <property type="entry name" value="RNA_pol_bsu_protrusion"/>
</dbReference>
<dbReference type="InterPro" id="IPR007642">
    <property type="entry name" value="RNA_pol_Rpb2_2"/>
</dbReference>
<dbReference type="InterPro" id="IPR037034">
    <property type="entry name" value="RNA_pol_Rpb2_2_sf"/>
</dbReference>
<dbReference type="InterPro" id="IPR007645">
    <property type="entry name" value="RNA_pol_Rpb2_3"/>
</dbReference>
<dbReference type="InterPro" id="IPR007641">
    <property type="entry name" value="RNA_pol_Rpb2_7"/>
</dbReference>
<dbReference type="InterPro" id="IPR014724">
    <property type="entry name" value="RNA_pol_RPB2_OB-fold"/>
</dbReference>
<dbReference type="NCBIfam" id="NF001616">
    <property type="entry name" value="PRK00405.1"/>
    <property type="match status" value="1"/>
</dbReference>
<dbReference type="NCBIfam" id="TIGR02013">
    <property type="entry name" value="rpoB"/>
    <property type="match status" value="1"/>
</dbReference>
<dbReference type="PANTHER" id="PTHR20856">
    <property type="entry name" value="DNA-DIRECTED RNA POLYMERASE I SUBUNIT 2"/>
    <property type="match status" value="1"/>
</dbReference>
<dbReference type="Pfam" id="PF04563">
    <property type="entry name" value="RNA_pol_Rpb2_1"/>
    <property type="match status" value="1"/>
</dbReference>
<dbReference type="Pfam" id="PF04561">
    <property type="entry name" value="RNA_pol_Rpb2_2"/>
    <property type="match status" value="2"/>
</dbReference>
<dbReference type="Pfam" id="PF04565">
    <property type="entry name" value="RNA_pol_Rpb2_3"/>
    <property type="match status" value="1"/>
</dbReference>
<dbReference type="Pfam" id="PF10385">
    <property type="entry name" value="RNA_pol_Rpb2_45"/>
    <property type="match status" value="1"/>
</dbReference>
<dbReference type="Pfam" id="PF00562">
    <property type="entry name" value="RNA_pol_Rpb2_6"/>
    <property type="match status" value="1"/>
</dbReference>
<dbReference type="Pfam" id="PF04560">
    <property type="entry name" value="RNA_pol_Rpb2_7"/>
    <property type="match status" value="1"/>
</dbReference>
<dbReference type="SUPFAM" id="SSF64484">
    <property type="entry name" value="beta and beta-prime subunits of DNA dependent RNA-polymerase"/>
    <property type="match status" value="1"/>
</dbReference>
<dbReference type="PROSITE" id="PS01166">
    <property type="entry name" value="RNA_POL_BETA"/>
    <property type="match status" value="1"/>
</dbReference>
<name>RPOB_STAAN</name>
<sequence length="1183" mass="133219">MAGQVVQYGRHRKRRNYARISEVLELPNLIEIQTKSYEWFLREGLIEMFRDISPIEDFTGNLSLEFVDYRLGEPKYDLEESKNRDATYAAPLRVKVRLIIKETGEVKEQEVFMGDFPLMTDTGTFVINGAERVIVSQLVRSPSVYFNEKIDKNGRENYDATIIPNRGAWLEYETDAKDVVYVRIDRTRKLPLTVLLRALGFSSDQEIVDLLGDNEYLRNTLEKDGTENTEQALLEIYERLRPGEPPTVENAKSLLYSRFFDPKRYDLASVGRYKTNKKLHLKHRLFNQKLAEPIVNTETGEIVVEEGTVLDRRKIDEIMDVLESNANSEVFELHGSVIDEPVEIQSIKVYVPNDDEGRTTTVIGNAFPDSEVKCITPADIIASMSYFFNLLSGIGYTDDIDHLGNRRLRSVGELLQNQFRIGLSRMERVVRERMSIQDTESITPQQLINIRPVIASIKEFFGSSQLSQFMDQANPLAELTHKRRLSALGPGGLTRERAQMEVRDVHYSHYGRMCPIETPEGPNIGLINSLSSYARVNEFGFIETPYRKVDLDTHAITDQIDYLTADEEDSYVVAQANSKLDENGRFMDDEVVCRFRGNNTVMAKEKMDYMDVSPKQVVSAATACIPFLENDDSNRALMGANMQRQAVPLMNPEAPFVGTGMEHVAARDSGAAITAKHRGRVEHVESNEILVRRLVEENGVEHEGELDRYPLAKFKRSNSGTCYNQRPIVAVGDVVEYNEILADGPSMELGEMALGRNVVVGFMTWDGYNYEDAVIMSERLVKDDVYTSIHIEEYESEARDTKLGPEEITRDIPNVSESALKNLDDRGIVYIGAEVKDGDILVGKVTPKGVTELTAEERLLHAIFGEKAREVRDTSLRVPHGAGGIVLDVKVFNREEGDDTLSPGVNQLVRVYIVQKRKIHVGDKMCGRHGNKGVISKIVPEEDMPYLPDGRPIDIMLNPLGVPSRMNIGQVLELHLGMAAKNLGIHVASPVFDGANDDDVWSTIEEAGMARDGKTVLYDGRTGEPFDNRISVGVMYMLKLAHMVDDKLHARSTGPYSLVTQQPLGGKAQFGGQRFGEMEVWALEAYGAAYTLQEILTYKSDDTVGRVKTYEAIVKGENISRPSVPESFRVLMKELQSLGLDVKVMDEQDNEIEMTDVDDDDVVERKVDLQQNDAPETQKEVTD</sequence>
<proteinExistence type="evidence at protein level"/>
<protein>
    <recommendedName>
        <fullName evidence="1">DNA-directed RNA polymerase subunit beta</fullName>
        <shortName evidence="1">RNAP subunit beta</shortName>
        <ecNumber evidence="1">2.7.7.6</ecNumber>
    </recommendedName>
    <alternativeName>
        <fullName evidence="1">RNA polymerase subunit beta</fullName>
    </alternativeName>
    <alternativeName>
        <fullName evidence="1">Transcriptase subunit beta</fullName>
    </alternativeName>
</protein>